<reference key="1">
    <citation type="journal article" date="2008" name="J. Bacteriol.">
        <title>Insights into the environmental resistance gene pool from the genome sequence of the multidrug-resistant environmental isolate Escherichia coli SMS-3-5.</title>
        <authorList>
            <person name="Fricke W.F."/>
            <person name="Wright M.S."/>
            <person name="Lindell A.H."/>
            <person name="Harkins D.M."/>
            <person name="Baker-Austin C."/>
            <person name="Ravel J."/>
            <person name="Stepanauskas R."/>
        </authorList>
    </citation>
    <scope>NUCLEOTIDE SEQUENCE [LARGE SCALE GENOMIC DNA]</scope>
    <source>
        <strain>SMS-3-5 / SECEC</strain>
    </source>
</reference>
<evidence type="ECO:0000255" key="1">
    <source>
        <dbReference type="HAMAP-Rule" id="MF_00274"/>
    </source>
</evidence>
<dbReference type="EMBL" id="CP000970">
    <property type="protein sequence ID" value="ACB18034.1"/>
    <property type="molecule type" value="Genomic_DNA"/>
</dbReference>
<dbReference type="RefSeq" id="WP_000467098.1">
    <property type="nucleotide sequence ID" value="NC_010498.1"/>
</dbReference>
<dbReference type="SMR" id="B1LJM8"/>
<dbReference type="KEGG" id="ecm:EcSMS35_0514"/>
<dbReference type="HOGENOM" id="CLU_140930_0_0_6"/>
<dbReference type="Proteomes" id="UP000007011">
    <property type="component" value="Chromosome"/>
</dbReference>
<dbReference type="GO" id="GO:0043590">
    <property type="term" value="C:bacterial nucleoid"/>
    <property type="evidence" value="ECO:0007669"/>
    <property type="project" value="UniProtKB-UniRule"/>
</dbReference>
<dbReference type="GO" id="GO:0005829">
    <property type="term" value="C:cytosol"/>
    <property type="evidence" value="ECO:0007669"/>
    <property type="project" value="TreeGrafter"/>
</dbReference>
<dbReference type="GO" id="GO:0003677">
    <property type="term" value="F:DNA binding"/>
    <property type="evidence" value="ECO:0007669"/>
    <property type="project" value="UniProtKB-UniRule"/>
</dbReference>
<dbReference type="FunFam" id="3.30.1310.10:FF:000001">
    <property type="entry name" value="Nucleoid-associated protein YbaB"/>
    <property type="match status" value="1"/>
</dbReference>
<dbReference type="Gene3D" id="3.30.1310.10">
    <property type="entry name" value="Nucleoid-associated protein YbaB-like domain"/>
    <property type="match status" value="1"/>
</dbReference>
<dbReference type="HAMAP" id="MF_00274">
    <property type="entry name" value="DNA_YbaB_EbfC"/>
    <property type="match status" value="1"/>
</dbReference>
<dbReference type="InterPro" id="IPR036894">
    <property type="entry name" value="YbaB-like_sf"/>
</dbReference>
<dbReference type="InterPro" id="IPR004401">
    <property type="entry name" value="YbaB/EbfC"/>
</dbReference>
<dbReference type="NCBIfam" id="TIGR00103">
    <property type="entry name" value="DNA_YbaB_EbfC"/>
    <property type="match status" value="1"/>
</dbReference>
<dbReference type="PANTHER" id="PTHR33449">
    <property type="entry name" value="NUCLEOID-ASSOCIATED PROTEIN YBAB"/>
    <property type="match status" value="1"/>
</dbReference>
<dbReference type="PANTHER" id="PTHR33449:SF1">
    <property type="entry name" value="NUCLEOID-ASSOCIATED PROTEIN YBAB"/>
    <property type="match status" value="1"/>
</dbReference>
<dbReference type="Pfam" id="PF02575">
    <property type="entry name" value="YbaB_DNA_bd"/>
    <property type="match status" value="1"/>
</dbReference>
<dbReference type="PIRSF" id="PIRSF004555">
    <property type="entry name" value="UCP004555"/>
    <property type="match status" value="1"/>
</dbReference>
<dbReference type="SUPFAM" id="SSF82607">
    <property type="entry name" value="YbaB-like"/>
    <property type="match status" value="1"/>
</dbReference>
<feature type="chain" id="PRO_1000119322" description="Nucleoid-associated protein YbaB">
    <location>
        <begin position="1"/>
        <end position="109"/>
    </location>
</feature>
<keyword id="KW-0963">Cytoplasm</keyword>
<keyword id="KW-0238">DNA-binding</keyword>
<comment type="function">
    <text evidence="1">Binds to DNA and alters its conformation. May be involved in regulation of gene expression, nucleoid organization and DNA protection.</text>
</comment>
<comment type="subunit">
    <text evidence="1">Homodimer.</text>
</comment>
<comment type="subcellular location">
    <subcellularLocation>
        <location evidence="1">Cytoplasm</location>
        <location evidence="1">Nucleoid</location>
    </subcellularLocation>
</comment>
<comment type="similarity">
    <text evidence="1">Belongs to the YbaB/EbfC family.</text>
</comment>
<organism>
    <name type="scientific">Escherichia coli (strain SMS-3-5 / SECEC)</name>
    <dbReference type="NCBI Taxonomy" id="439855"/>
    <lineage>
        <taxon>Bacteria</taxon>
        <taxon>Pseudomonadati</taxon>
        <taxon>Pseudomonadota</taxon>
        <taxon>Gammaproteobacteria</taxon>
        <taxon>Enterobacterales</taxon>
        <taxon>Enterobacteriaceae</taxon>
        <taxon>Escherichia</taxon>
    </lineage>
</organism>
<sequence length="109" mass="12015">MFGKGGLGNLMKQAQQMQEKMQKMQEEIAQLEVTGESGAGLVKVTINGAHNCRRVEIDPSLLEDDKEMLEDLVAAAFNDAARRIEETQKEKMASVSSGMQLPPGFKMPF</sequence>
<gene>
    <name evidence="1" type="primary">ybaB</name>
    <name type="ordered locus">EcSMS35_0514</name>
</gene>
<proteinExistence type="inferred from homology"/>
<name>YBAB_ECOSM</name>
<protein>
    <recommendedName>
        <fullName evidence="1">Nucleoid-associated protein YbaB</fullName>
    </recommendedName>
</protein>
<accession>B1LJM8</accession>